<evidence type="ECO:0000255" key="1"/>
<evidence type="ECO:0000255" key="2">
    <source>
        <dbReference type="PROSITE-ProRule" id="PRU00498"/>
    </source>
</evidence>
<evidence type="ECO:0000255" key="3">
    <source>
        <dbReference type="PROSITE-ProRule" id="PRU00521"/>
    </source>
</evidence>
<evidence type="ECO:0000256" key="4">
    <source>
        <dbReference type="SAM" id="MobiDB-lite"/>
    </source>
</evidence>
<evidence type="ECO:0000269" key="5">
    <source>
    </source>
</evidence>
<evidence type="ECO:0000269" key="6">
    <source>
    </source>
</evidence>
<evidence type="ECO:0000269" key="7">
    <source>
    </source>
</evidence>
<evidence type="ECO:0000269" key="8">
    <source>
    </source>
</evidence>
<evidence type="ECO:0000303" key="9">
    <source>
    </source>
</evidence>
<evidence type="ECO:0000305" key="10"/>
<evidence type="ECO:0000312" key="11">
    <source>
        <dbReference type="EMBL" id="AAQ19611.1"/>
    </source>
</evidence>
<evidence type="ECO:0000312" key="12">
    <source>
        <dbReference type="EMBL" id="AAY54900.1"/>
    </source>
</evidence>
<evidence type="ECO:0000312" key="13">
    <source>
        <dbReference type="FlyBase" id="FBgn0033058"/>
    </source>
</evidence>
<evidence type="ECO:0000312" key="14">
    <source>
        <dbReference type="Proteomes" id="UP000000803"/>
    </source>
</evidence>
<keyword id="KW-0025">Alternative splicing</keyword>
<keyword id="KW-1003">Cell membrane</keyword>
<keyword id="KW-1015">Disulfide bond</keyword>
<keyword id="KW-0297">G-protein coupled receptor</keyword>
<keyword id="KW-0325">Glycoprotein</keyword>
<keyword id="KW-0472">Membrane</keyword>
<keyword id="KW-0675">Receptor</keyword>
<keyword id="KW-1185">Reference proteome</keyword>
<keyword id="KW-0807">Transducer</keyword>
<keyword id="KW-0812">Transmembrane</keyword>
<keyword id="KW-1133">Transmembrane helix</keyword>
<gene>
    <name evidence="13" type="primary">CCHa2-R</name>
    <name evidence="13" type="ORF">CG14593</name>
</gene>
<sequence length="489" mass="53531">MYASLMDVGQTLAARLADSDGNGANDSGLLATGQGLEQEQEGLALDMGHNASADGGIVPYVPVLDRPETYIVTVLYTLIFIVGVLGNGTLVIIFFRHRSMRNIPNTYILSLALADLLVILVCVPVATIVYTQESWPFERNMCRISEFFKDISIGVSVFTLTALSGERYCAIVNPLRKLQTKPLTVFTAVMIWILAILLGMPSVLFSDIKSYPVFTATGNMTIEVCSPFRDPEYAKFMVAGKALVYYLLPLSIIGALYIMMAKRLHMSARNMPGEQQSMQSRTQARARLHVARMVVAFVVVFFICFFPYHVFELWYHFYPTAEEDFDEFWNVLRIVGFCTSFLNSCVNPVALYCVSGVFRQHFNRYLCCICVKRQPHLRQHSTATGMMDNTSVMSMRRSTYVGGTAGNLRASLHRNSNHGVGGAGGGVGGGVGSGRVGSFHRQDSMPLQHGNAHGGGAGGGSSGLGAGGRTAAVSEKSFINRYESGVMRY</sequence>
<name>CCH2R_DROME</name>
<accession>Q4V622</accession>
<accession>A1Z6J7</accession>
<accession>A9UJU7</accession>
<accession>E1JGY1</accession>
<comment type="function">
    <text evidence="5 6">Receptor for the neuropeptide CCHamide-2.</text>
</comment>
<comment type="subcellular location">
    <subcellularLocation>
        <location evidence="10">Cell membrane</location>
        <topology evidence="1">Multi-pass membrane protein</topology>
    </subcellularLocation>
</comment>
<comment type="alternative products">
    <event type="alternative splicing"/>
    <isoform>
        <id>Q4V622-1</id>
        <name evidence="13">A</name>
        <sequence type="displayed"/>
    </isoform>
    <isoform>
        <id>Q4V622-2</id>
        <name evidence="13">B</name>
        <sequence type="described" ref="VSP_057998 VSP_057999"/>
    </isoform>
</comment>
<comment type="tissue specificity">
    <text evidence="7 8">Highly expressed in larval brain (PubMed:24098432, PubMed:26020940). Also highly expressed in adult brain with very low levels in larval and adult gut (PubMed:24098432).</text>
</comment>
<comment type="developmental stage">
    <text evidence="7">Very low expression in eggs. Expression increases during the first and second instar larval stages, decreases in the third instar larval stage, increases again in pupae and decreases slightly in adults.</text>
</comment>
<comment type="disruption phenotype">
    <text evidence="8">Reduced levels of insulin-like peptide Ilp5 mRNA, reduced secretion of Ilp2 and Ilp5 proteins in mid-L3 larvae, growth defects and developmental delay during larval stages.</text>
</comment>
<comment type="similarity">
    <text evidence="3">Belongs to the G-protein coupled receptor 1 family.</text>
</comment>
<feature type="chain" id="PRO_0000435024" description="Neuropeptide CCHamide-2 receptor" evidence="10">
    <location>
        <begin position="1"/>
        <end position="489"/>
    </location>
</feature>
<feature type="topological domain" description="Extracellular" evidence="1">
    <location>
        <begin position="1"/>
        <end position="74"/>
    </location>
</feature>
<feature type="transmembrane region" description="Helical; Name=1" evidence="1">
    <location>
        <begin position="75"/>
        <end position="95"/>
    </location>
</feature>
<feature type="topological domain" description="Cytoplasmic" evidence="1">
    <location>
        <begin position="96"/>
        <end position="107"/>
    </location>
</feature>
<feature type="transmembrane region" description="Helical; Name=2" evidence="1">
    <location>
        <begin position="108"/>
        <end position="128"/>
    </location>
</feature>
<feature type="topological domain" description="Extracellular" evidence="1">
    <location>
        <begin position="129"/>
        <end position="143"/>
    </location>
</feature>
<feature type="transmembrane region" description="Helical; Name=3" evidence="1">
    <location>
        <begin position="144"/>
        <end position="164"/>
    </location>
</feature>
<feature type="topological domain" description="Cytoplasmic" evidence="1">
    <location>
        <begin position="165"/>
        <end position="184"/>
    </location>
</feature>
<feature type="transmembrane region" description="Helical; Name=4" evidence="1">
    <location>
        <begin position="185"/>
        <end position="205"/>
    </location>
</feature>
<feature type="topological domain" description="Extracellular" evidence="1">
    <location>
        <begin position="206"/>
        <end position="235"/>
    </location>
</feature>
<feature type="transmembrane region" description="Helical; Name=5" evidence="1">
    <location>
        <begin position="236"/>
        <end position="256"/>
    </location>
</feature>
<feature type="topological domain" description="Cytoplasmic" evidence="1">
    <location>
        <begin position="257"/>
        <end position="293"/>
    </location>
</feature>
<feature type="transmembrane region" description="Helical; Name=6" evidence="1">
    <location>
        <begin position="294"/>
        <end position="314"/>
    </location>
</feature>
<feature type="topological domain" description="Extracellular" evidence="1">
    <location>
        <begin position="315"/>
        <end position="333"/>
    </location>
</feature>
<feature type="transmembrane region" description="Helical; Name=7" evidence="1">
    <location>
        <begin position="334"/>
        <end position="354"/>
    </location>
</feature>
<feature type="topological domain" description="Cytoplasmic" evidence="1">
    <location>
        <begin position="355"/>
        <end position="489"/>
    </location>
</feature>
<feature type="region of interest" description="Disordered" evidence="4">
    <location>
        <begin position="438"/>
        <end position="468"/>
    </location>
</feature>
<feature type="compositionally biased region" description="Gly residues" evidence="4">
    <location>
        <begin position="452"/>
        <end position="468"/>
    </location>
</feature>
<feature type="glycosylation site" description="N-linked (GlcNAc...) asparagine" evidence="2">
    <location>
        <position position="25"/>
    </location>
</feature>
<feature type="glycosylation site" description="N-linked (GlcNAc...) asparagine" evidence="2">
    <location>
        <position position="50"/>
    </location>
</feature>
<feature type="glycosylation site" description="N-linked (GlcNAc...) asparagine" evidence="2">
    <location>
        <position position="219"/>
    </location>
</feature>
<feature type="disulfide bond" evidence="3">
    <location>
        <begin position="142"/>
        <end position="225"/>
    </location>
</feature>
<feature type="splice variant" id="VSP_057998" description="In isoform B.">
    <original>S</original>
    <variation>R</variation>
    <location>
        <position position="477"/>
    </location>
</feature>
<feature type="splice variant" id="VSP_057999" description="In isoform B.">
    <location>
        <begin position="478"/>
        <end position="489"/>
    </location>
</feature>
<feature type="sequence conflict" description="In Ref. 1; AAQ19611." evidence="10" ref="1">
    <original>A</original>
    <variation>T</variation>
    <location>
        <position position="261"/>
    </location>
</feature>
<organism evidence="12">
    <name type="scientific">Drosophila melanogaster</name>
    <name type="common">Fruit fly</name>
    <dbReference type="NCBI Taxonomy" id="7227"/>
    <lineage>
        <taxon>Eukaryota</taxon>
        <taxon>Metazoa</taxon>
        <taxon>Ecdysozoa</taxon>
        <taxon>Arthropoda</taxon>
        <taxon>Hexapoda</taxon>
        <taxon>Insecta</taxon>
        <taxon>Pterygota</taxon>
        <taxon>Neoptera</taxon>
        <taxon>Endopterygota</taxon>
        <taxon>Diptera</taxon>
        <taxon>Brachycera</taxon>
        <taxon>Muscomorpha</taxon>
        <taxon>Ephydroidea</taxon>
        <taxon>Drosophilidae</taxon>
        <taxon>Drosophila</taxon>
        <taxon>Sophophora</taxon>
    </lineage>
</organism>
<reference evidence="11" key="1">
    <citation type="journal article" date="2011" name="Biochem. Biophys. Res. Commun.">
        <title>The Drosophila genes CG14593 and CG30106 code for G-protein-coupled receptors specifically activated by the neuropeptides CCHamide-1 and CCHamide-2.</title>
        <authorList>
            <person name="Hansen K.K."/>
            <person name="Hauser F."/>
            <person name="Williamson M."/>
            <person name="Weber S.B."/>
            <person name="Grimmelikhuijzen C.J."/>
        </authorList>
    </citation>
    <scope>NUCLEOTIDE SEQUENCE [MRNA] (ISOFORM B)</scope>
    <scope>FUNCTION</scope>
</reference>
<reference evidence="14" key="2">
    <citation type="journal article" date="2000" name="Science">
        <title>The genome sequence of Drosophila melanogaster.</title>
        <authorList>
            <person name="Adams M.D."/>
            <person name="Celniker S.E."/>
            <person name="Holt R.A."/>
            <person name="Evans C.A."/>
            <person name="Gocayne J.D."/>
            <person name="Amanatides P.G."/>
            <person name="Scherer S.E."/>
            <person name="Li P.W."/>
            <person name="Hoskins R.A."/>
            <person name="Galle R.F."/>
            <person name="George R.A."/>
            <person name="Lewis S.E."/>
            <person name="Richards S."/>
            <person name="Ashburner M."/>
            <person name="Henderson S.N."/>
            <person name="Sutton G.G."/>
            <person name="Wortman J.R."/>
            <person name="Yandell M.D."/>
            <person name="Zhang Q."/>
            <person name="Chen L.X."/>
            <person name="Brandon R.C."/>
            <person name="Rogers Y.-H.C."/>
            <person name="Blazej R.G."/>
            <person name="Champe M."/>
            <person name="Pfeiffer B.D."/>
            <person name="Wan K.H."/>
            <person name="Doyle C."/>
            <person name="Baxter E.G."/>
            <person name="Helt G."/>
            <person name="Nelson C.R."/>
            <person name="Miklos G.L.G."/>
            <person name="Abril J.F."/>
            <person name="Agbayani A."/>
            <person name="An H.-J."/>
            <person name="Andrews-Pfannkoch C."/>
            <person name="Baldwin D."/>
            <person name="Ballew R.M."/>
            <person name="Basu A."/>
            <person name="Baxendale J."/>
            <person name="Bayraktaroglu L."/>
            <person name="Beasley E.M."/>
            <person name="Beeson K.Y."/>
            <person name="Benos P.V."/>
            <person name="Berman B.P."/>
            <person name="Bhandari D."/>
            <person name="Bolshakov S."/>
            <person name="Borkova D."/>
            <person name="Botchan M.R."/>
            <person name="Bouck J."/>
            <person name="Brokstein P."/>
            <person name="Brottier P."/>
            <person name="Burtis K.C."/>
            <person name="Busam D.A."/>
            <person name="Butler H."/>
            <person name="Cadieu E."/>
            <person name="Center A."/>
            <person name="Chandra I."/>
            <person name="Cherry J.M."/>
            <person name="Cawley S."/>
            <person name="Dahlke C."/>
            <person name="Davenport L.B."/>
            <person name="Davies P."/>
            <person name="de Pablos B."/>
            <person name="Delcher A."/>
            <person name="Deng Z."/>
            <person name="Mays A.D."/>
            <person name="Dew I."/>
            <person name="Dietz S.M."/>
            <person name="Dodson K."/>
            <person name="Doup L.E."/>
            <person name="Downes M."/>
            <person name="Dugan-Rocha S."/>
            <person name="Dunkov B.C."/>
            <person name="Dunn P."/>
            <person name="Durbin K.J."/>
            <person name="Evangelista C.C."/>
            <person name="Ferraz C."/>
            <person name="Ferriera S."/>
            <person name="Fleischmann W."/>
            <person name="Fosler C."/>
            <person name="Gabrielian A.E."/>
            <person name="Garg N.S."/>
            <person name="Gelbart W.M."/>
            <person name="Glasser K."/>
            <person name="Glodek A."/>
            <person name="Gong F."/>
            <person name="Gorrell J.H."/>
            <person name="Gu Z."/>
            <person name="Guan P."/>
            <person name="Harris M."/>
            <person name="Harris N.L."/>
            <person name="Harvey D.A."/>
            <person name="Heiman T.J."/>
            <person name="Hernandez J.R."/>
            <person name="Houck J."/>
            <person name="Hostin D."/>
            <person name="Houston K.A."/>
            <person name="Howland T.J."/>
            <person name="Wei M.-H."/>
            <person name="Ibegwam C."/>
            <person name="Jalali M."/>
            <person name="Kalush F."/>
            <person name="Karpen G.H."/>
            <person name="Ke Z."/>
            <person name="Kennison J.A."/>
            <person name="Ketchum K.A."/>
            <person name="Kimmel B.E."/>
            <person name="Kodira C.D."/>
            <person name="Kraft C.L."/>
            <person name="Kravitz S."/>
            <person name="Kulp D."/>
            <person name="Lai Z."/>
            <person name="Lasko P."/>
            <person name="Lei Y."/>
            <person name="Levitsky A.A."/>
            <person name="Li J.H."/>
            <person name="Li Z."/>
            <person name="Liang Y."/>
            <person name="Lin X."/>
            <person name="Liu X."/>
            <person name="Mattei B."/>
            <person name="McIntosh T.C."/>
            <person name="McLeod M.P."/>
            <person name="McPherson D."/>
            <person name="Merkulov G."/>
            <person name="Milshina N.V."/>
            <person name="Mobarry C."/>
            <person name="Morris J."/>
            <person name="Moshrefi A."/>
            <person name="Mount S.M."/>
            <person name="Moy M."/>
            <person name="Murphy B."/>
            <person name="Murphy L."/>
            <person name="Muzny D.M."/>
            <person name="Nelson D.L."/>
            <person name="Nelson D.R."/>
            <person name="Nelson K.A."/>
            <person name="Nixon K."/>
            <person name="Nusskern D.R."/>
            <person name="Pacleb J.M."/>
            <person name="Palazzolo M."/>
            <person name="Pittman G.S."/>
            <person name="Pan S."/>
            <person name="Pollard J."/>
            <person name="Puri V."/>
            <person name="Reese M.G."/>
            <person name="Reinert K."/>
            <person name="Remington K."/>
            <person name="Saunders R.D.C."/>
            <person name="Scheeler F."/>
            <person name="Shen H."/>
            <person name="Shue B.C."/>
            <person name="Siden-Kiamos I."/>
            <person name="Simpson M."/>
            <person name="Skupski M.P."/>
            <person name="Smith T.J."/>
            <person name="Spier E."/>
            <person name="Spradling A.C."/>
            <person name="Stapleton M."/>
            <person name="Strong R."/>
            <person name="Sun E."/>
            <person name="Svirskas R."/>
            <person name="Tector C."/>
            <person name="Turner R."/>
            <person name="Venter E."/>
            <person name="Wang A.H."/>
            <person name="Wang X."/>
            <person name="Wang Z.-Y."/>
            <person name="Wassarman D.A."/>
            <person name="Weinstock G.M."/>
            <person name="Weissenbach J."/>
            <person name="Williams S.M."/>
            <person name="Woodage T."/>
            <person name="Worley K.C."/>
            <person name="Wu D."/>
            <person name="Yang S."/>
            <person name="Yao Q.A."/>
            <person name="Ye J."/>
            <person name="Yeh R.-F."/>
            <person name="Zaveri J.S."/>
            <person name="Zhan M."/>
            <person name="Zhang G."/>
            <person name="Zhao Q."/>
            <person name="Zheng L."/>
            <person name="Zheng X.H."/>
            <person name="Zhong F.N."/>
            <person name="Zhong W."/>
            <person name="Zhou X."/>
            <person name="Zhu S.C."/>
            <person name="Zhu X."/>
            <person name="Smith H.O."/>
            <person name="Gibbs R.A."/>
            <person name="Myers E.W."/>
            <person name="Rubin G.M."/>
            <person name="Venter J.C."/>
        </authorList>
    </citation>
    <scope>NUCLEOTIDE SEQUENCE [LARGE SCALE GENOMIC DNA]</scope>
    <source>
        <strain evidence="14">Berkeley</strain>
    </source>
</reference>
<reference evidence="14" key="3">
    <citation type="journal article" date="2002" name="Genome Biol.">
        <title>Annotation of the Drosophila melanogaster euchromatic genome: a systematic review.</title>
        <authorList>
            <person name="Misra S."/>
            <person name="Crosby M.A."/>
            <person name="Mungall C.J."/>
            <person name="Matthews B.B."/>
            <person name="Campbell K.S."/>
            <person name="Hradecky P."/>
            <person name="Huang Y."/>
            <person name="Kaminker J.S."/>
            <person name="Millburn G.H."/>
            <person name="Prochnik S.E."/>
            <person name="Smith C.D."/>
            <person name="Tupy J.L."/>
            <person name="Whitfield E.J."/>
            <person name="Bayraktaroglu L."/>
            <person name="Berman B.P."/>
            <person name="Bettencourt B.R."/>
            <person name="Celniker S.E."/>
            <person name="de Grey A.D.N.J."/>
            <person name="Drysdale R.A."/>
            <person name="Harris N.L."/>
            <person name="Richter J."/>
            <person name="Russo S."/>
            <person name="Schroeder A.J."/>
            <person name="Shu S.Q."/>
            <person name="Stapleton M."/>
            <person name="Yamada C."/>
            <person name="Ashburner M."/>
            <person name="Gelbart W.M."/>
            <person name="Rubin G.M."/>
            <person name="Lewis S.E."/>
        </authorList>
    </citation>
    <scope>GENOME REANNOTATION</scope>
    <source>
        <strain evidence="14">Berkeley</strain>
    </source>
</reference>
<reference evidence="12" key="4">
    <citation type="submission" date="2005-05" db="EMBL/GenBank/DDBJ databases">
        <authorList>
            <person name="Stapleton M."/>
            <person name="Carlson J."/>
            <person name="Chavez C."/>
            <person name="Frise E."/>
            <person name="George R."/>
            <person name="Pacleb J."/>
            <person name="Park S."/>
            <person name="Wan K."/>
            <person name="Yu C."/>
            <person name="Celniker S."/>
        </authorList>
    </citation>
    <scope>NUCLEOTIDE SEQUENCE [LARGE SCALE MRNA] (ISOFORM A)</scope>
</reference>
<reference evidence="10" key="5">
    <citation type="journal article" date="2012" name="Front. Endocrinol.">
        <title>Isolation of the bioactive peptides CCHamide-1 and CCHamide-2 from Drosophila and their putative role in appetite regulation as ligands for G protein-coupled receptors.</title>
        <authorList>
            <person name="Ida T."/>
            <person name="Takahashi T."/>
            <person name="Tominaga H."/>
            <person name="Sato T."/>
            <person name="Sano H."/>
            <person name="Kume K."/>
            <person name="Ozaki M."/>
            <person name="Hiraguchi T."/>
            <person name="Shiotani H."/>
            <person name="Terajima S."/>
            <person name="Nakamura Y."/>
            <person name="Mori K."/>
            <person name="Yoshida M."/>
            <person name="Kato J."/>
            <person name="Murakami N."/>
            <person name="Miyazato M."/>
            <person name="Kangawa K."/>
            <person name="Kojima M."/>
        </authorList>
    </citation>
    <scope>FUNCTION</scope>
</reference>
<reference evidence="10" key="6">
    <citation type="journal article" date="2013" name="PLoS ONE">
        <title>Expression patterns of the Drosophila neuropeptide CCHamide-2 and its receptor may suggest hormonal signaling from the gut to the brain.</title>
        <authorList>
            <person name="Li S."/>
            <person name="Torre-Muruzabal T."/>
            <person name="Soegaard K.C."/>
            <person name="Ren G.R."/>
            <person name="Hauser F."/>
            <person name="Engelsen S.M."/>
            <person name="Poedenphanth M.D."/>
            <person name="Desjardins A."/>
            <person name="Grimmelikhuijzen C.J."/>
        </authorList>
    </citation>
    <scope>TISSUE SPECIFICITY</scope>
    <scope>DEVELOPMENTAL STAGE</scope>
    <source>
        <strain>Canton-S</strain>
    </source>
</reference>
<reference evidence="10" key="7">
    <citation type="journal article" date="2015" name="PLoS Genet.">
        <title>The nutrient-responsive hormone CCHamide-2 controls growth by regulating insulin-like peptides in the brain of Drosophila melanogaster.</title>
        <authorList>
            <person name="Sano H."/>
            <person name="Nakamura A."/>
            <person name="Texada M.J."/>
            <person name="Truman J.W."/>
            <person name="Ishimoto H."/>
            <person name="Kamikouchi A."/>
            <person name="Nibu Y."/>
            <person name="Kume K."/>
            <person name="Ida T."/>
            <person name="Kojima M."/>
        </authorList>
    </citation>
    <scope>TISSUE SPECIFICITY</scope>
    <scope>DISRUPTION PHENOTYPE</scope>
</reference>
<reference key="8">
    <citation type="journal article" date="2015" name="PLoS Genet.">
        <authorList>
            <person name="Sano H."/>
            <person name="Nakamura A."/>
            <person name="Texada M.J."/>
            <person name="Truman J.W."/>
            <person name="Ishimoto H."/>
            <person name="Kamikouchi A."/>
            <person name="Nibu Y."/>
            <person name="Kume K."/>
            <person name="Ida T."/>
            <person name="Kojima M."/>
        </authorList>
    </citation>
    <scope>ERRATUM OF PUBMED:26020940</scope>
</reference>
<proteinExistence type="evidence at transcript level"/>
<dbReference type="EMBL" id="AY282787">
    <property type="protein sequence ID" value="AAQ19611.1"/>
    <property type="molecule type" value="mRNA"/>
</dbReference>
<dbReference type="EMBL" id="AE013599">
    <property type="protein sequence ID" value="AAF57285.4"/>
    <property type="molecule type" value="Genomic_DNA"/>
</dbReference>
<dbReference type="EMBL" id="AE013599">
    <property type="protein sequence ID" value="ACZ94340.1"/>
    <property type="molecule type" value="Genomic_DNA"/>
</dbReference>
<dbReference type="EMBL" id="BT022484">
    <property type="protein sequence ID" value="AAY54900.1"/>
    <property type="molecule type" value="mRNA"/>
</dbReference>
<dbReference type="RefSeq" id="NP_001163060.1">
    <molecule id="Q4V622-2"/>
    <property type="nucleotide sequence ID" value="NM_001169589.2"/>
</dbReference>
<dbReference type="RefSeq" id="NP_610199.2">
    <molecule id="Q4V622-1"/>
    <property type="nucleotide sequence ID" value="NM_136355.4"/>
</dbReference>
<dbReference type="SMR" id="Q4V622"/>
<dbReference type="FunCoup" id="Q4V622">
    <property type="interactions" value="89"/>
</dbReference>
<dbReference type="STRING" id="7227.FBpp0423126"/>
<dbReference type="GlyCosmos" id="Q4V622">
    <property type="glycosylation" value="3 sites, No reported glycans"/>
</dbReference>
<dbReference type="GlyGen" id="Q4V622">
    <property type="glycosylation" value="4 sites"/>
</dbReference>
<dbReference type="PaxDb" id="7227-FBpp0085328"/>
<dbReference type="DNASU" id="35535"/>
<dbReference type="EnsemblMetazoa" id="FBtr0085975">
    <molecule id="Q4V622-1"/>
    <property type="protein sequence ID" value="FBpp0085328"/>
    <property type="gene ID" value="FBgn0033058"/>
</dbReference>
<dbReference type="EnsemblMetazoa" id="FBtr0301687">
    <molecule id="Q4V622-2"/>
    <property type="protein sequence ID" value="FBpp0290901"/>
    <property type="gene ID" value="FBgn0033058"/>
</dbReference>
<dbReference type="GeneID" id="35535"/>
<dbReference type="KEGG" id="dme:Dmel_CG14593"/>
<dbReference type="UCSC" id="CG14593-RA">
    <molecule id="Q4V622-1"/>
    <property type="organism name" value="d. melanogaster"/>
</dbReference>
<dbReference type="AGR" id="FB:FBgn0033058"/>
<dbReference type="CTD" id="35535"/>
<dbReference type="FlyBase" id="FBgn0033058">
    <property type="gene designation" value="CCHa2-R"/>
</dbReference>
<dbReference type="VEuPathDB" id="VectorBase:FBgn0033058"/>
<dbReference type="eggNOG" id="KOG4219">
    <property type="taxonomic scope" value="Eukaryota"/>
</dbReference>
<dbReference type="GeneTree" id="ENSGT01120000271837"/>
<dbReference type="InParanoid" id="Q4V622"/>
<dbReference type="OMA" id="HAFTTSH"/>
<dbReference type="OrthoDB" id="10049706at2759"/>
<dbReference type="PhylomeDB" id="Q4V622"/>
<dbReference type="Reactome" id="R-DME-416476">
    <property type="pathway name" value="G alpha (q) signalling events"/>
</dbReference>
<dbReference type="BioGRID-ORCS" id="35535">
    <property type="hits" value="0 hits in 3 CRISPR screens"/>
</dbReference>
<dbReference type="GenomeRNAi" id="35535"/>
<dbReference type="PRO" id="PR:Q4V622"/>
<dbReference type="Proteomes" id="UP000000803">
    <property type="component" value="Chromosome 2R"/>
</dbReference>
<dbReference type="Bgee" id="FBgn0033058">
    <property type="expression patterns" value="Expressed in transmedullary Y neuron TmY14 in brain and 7 other cell types or tissues"/>
</dbReference>
<dbReference type="ExpressionAtlas" id="Q4V622">
    <property type="expression patterns" value="baseline and differential"/>
</dbReference>
<dbReference type="GO" id="GO:0016020">
    <property type="term" value="C:membrane"/>
    <property type="evidence" value="ECO:0000314"/>
    <property type="project" value="FlyBase"/>
</dbReference>
<dbReference type="GO" id="GO:0005886">
    <property type="term" value="C:plasma membrane"/>
    <property type="evidence" value="ECO:0000318"/>
    <property type="project" value="GO_Central"/>
</dbReference>
<dbReference type="GO" id="GO:0008188">
    <property type="term" value="F:neuropeptide receptor activity"/>
    <property type="evidence" value="ECO:0000314"/>
    <property type="project" value="FlyBase"/>
</dbReference>
<dbReference type="GO" id="GO:0007186">
    <property type="term" value="P:G protein-coupled receptor signaling pathway"/>
    <property type="evidence" value="ECO:0000255"/>
    <property type="project" value="FlyBase"/>
</dbReference>
<dbReference type="GO" id="GO:0007218">
    <property type="term" value="P:neuropeptide signaling pathway"/>
    <property type="evidence" value="ECO:0000314"/>
    <property type="project" value="FlyBase"/>
</dbReference>
<dbReference type="CDD" id="cd15927">
    <property type="entry name" value="7tmA_Bombesin_R-like"/>
    <property type="match status" value="1"/>
</dbReference>
<dbReference type="FunFam" id="1.20.1070.10:FF:000286">
    <property type="entry name" value="Neuropeptide CCHamide-1 receptor"/>
    <property type="match status" value="1"/>
</dbReference>
<dbReference type="Gene3D" id="1.20.1070.10">
    <property type="entry name" value="Rhodopsin 7-helix transmembrane proteins"/>
    <property type="match status" value="1"/>
</dbReference>
<dbReference type="InterPro" id="IPR001556">
    <property type="entry name" value="Bombsn_rcpt-like"/>
</dbReference>
<dbReference type="InterPro" id="IPR000276">
    <property type="entry name" value="GPCR_Rhodpsn"/>
</dbReference>
<dbReference type="InterPro" id="IPR017452">
    <property type="entry name" value="GPCR_Rhodpsn_7TM"/>
</dbReference>
<dbReference type="PANTHER" id="PTHR45695">
    <property type="entry name" value="LEUCOKININ RECEPTOR-RELATED"/>
    <property type="match status" value="1"/>
</dbReference>
<dbReference type="PANTHER" id="PTHR45695:SF24">
    <property type="entry name" value="NEUROPEPTIDE CCHAMIDE-2 RECEPTOR"/>
    <property type="match status" value="1"/>
</dbReference>
<dbReference type="Pfam" id="PF00001">
    <property type="entry name" value="7tm_1"/>
    <property type="match status" value="1"/>
</dbReference>
<dbReference type="PRINTS" id="PR00358">
    <property type="entry name" value="BOMBESINR"/>
</dbReference>
<dbReference type="PRINTS" id="PR00237">
    <property type="entry name" value="GPCRRHODOPSN"/>
</dbReference>
<dbReference type="SUPFAM" id="SSF81321">
    <property type="entry name" value="Family A G protein-coupled receptor-like"/>
    <property type="match status" value="1"/>
</dbReference>
<dbReference type="PROSITE" id="PS50262">
    <property type="entry name" value="G_PROTEIN_RECEP_F1_2"/>
    <property type="match status" value="1"/>
</dbReference>
<protein>
    <recommendedName>
        <fullName evidence="9">Neuropeptide CCHamide-2 receptor</fullName>
    </recommendedName>
</protein>